<sequence>MAASATATVGTKGIVRQVIGPVLDVEFPAGKLPSILNALRIEGKNPAGQDVALTAEVQQLLGDHRVRAVAMSGTDGLVRGMEALDTGAPISVPVGEATLGRIFNVLGEPVDEQGDLKNVTTSPIHRSAPSLTDLETKPKVFETGIKVIDLLAPYRQGGKVGLFGGAGVGKTVLIQELINNIAKEHGGVSVFGGVGERTREGNDLYEEFKESGVINSEDLTKSKVALCFGQMNEPPGARMRVGLSALTMAEHFRDVNKQDVLLFIDNIFRFVQAGSEVSALLGRMPSAVGYQPTLGTDVGELQERITSTLEGSITSIQAVYVPADDLTDPAPATTFAHLDATTVLARALAAKGIYPAVDPLDSTSTMLQPSVVGDEHYRTARAVQSTLQRYKELQDIIAILGLDELSEEDRKTVDRARKIEKFLSQPFFVAEIFTGMSGKYVKLEDTIKGFNMILSGELDQLPEQAFYLVGSIDEVKAKAEKLASEAKA</sequence>
<gene>
    <name evidence="1" type="primary">atpD</name>
    <name evidence="1" type="synonym">atpB</name>
    <name type="ordered locus">NATL1_18381</name>
</gene>
<proteinExistence type="inferred from homology"/>
<comment type="function">
    <text evidence="1">Produces ATP from ADP in the presence of a proton gradient across the membrane. The catalytic sites are hosted primarily by the beta subunits.</text>
</comment>
<comment type="catalytic activity">
    <reaction evidence="1">
        <text>ATP + H2O + 4 H(+)(in) = ADP + phosphate + 5 H(+)(out)</text>
        <dbReference type="Rhea" id="RHEA:57720"/>
        <dbReference type="ChEBI" id="CHEBI:15377"/>
        <dbReference type="ChEBI" id="CHEBI:15378"/>
        <dbReference type="ChEBI" id="CHEBI:30616"/>
        <dbReference type="ChEBI" id="CHEBI:43474"/>
        <dbReference type="ChEBI" id="CHEBI:456216"/>
        <dbReference type="EC" id="7.1.2.2"/>
    </reaction>
</comment>
<comment type="subunit">
    <text evidence="1">F-type ATPases have 2 components, CF(1) - the catalytic core - and CF(0) - the membrane proton channel. CF(1) has five subunits: alpha(3), beta(3), gamma(1), delta(1), epsilon(1). CF(0) has four main subunits: a(1), b(1), b'(1) and c(9-12).</text>
</comment>
<comment type="subcellular location">
    <subcellularLocation>
        <location evidence="1">Cellular thylakoid membrane</location>
        <topology evidence="1">Peripheral membrane protein</topology>
    </subcellularLocation>
</comment>
<comment type="similarity">
    <text evidence="1">Belongs to the ATPase alpha/beta chains family.</text>
</comment>
<reference key="1">
    <citation type="journal article" date="2007" name="PLoS Genet.">
        <title>Patterns and implications of gene gain and loss in the evolution of Prochlorococcus.</title>
        <authorList>
            <person name="Kettler G.C."/>
            <person name="Martiny A.C."/>
            <person name="Huang K."/>
            <person name="Zucker J."/>
            <person name="Coleman M.L."/>
            <person name="Rodrigue S."/>
            <person name="Chen F."/>
            <person name="Lapidus A."/>
            <person name="Ferriera S."/>
            <person name="Johnson J."/>
            <person name="Steglich C."/>
            <person name="Church G.M."/>
            <person name="Richardson P."/>
            <person name="Chisholm S.W."/>
        </authorList>
    </citation>
    <scope>NUCLEOTIDE SEQUENCE [LARGE SCALE GENOMIC DNA]</scope>
    <source>
        <strain>NATL1A</strain>
    </source>
</reference>
<feature type="chain" id="PRO_1000055143" description="ATP synthase subunit beta">
    <location>
        <begin position="1"/>
        <end position="488"/>
    </location>
</feature>
<feature type="binding site" evidence="1">
    <location>
        <begin position="164"/>
        <end position="171"/>
    </location>
    <ligand>
        <name>ATP</name>
        <dbReference type="ChEBI" id="CHEBI:30616"/>
    </ligand>
</feature>
<organism>
    <name type="scientific">Prochlorococcus marinus (strain NATL1A)</name>
    <dbReference type="NCBI Taxonomy" id="167555"/>
    <lineage>
        <taxon>Bacteria</taxon>
        <taxon>Bacillati</taxon>
        <taxon>Cyanobacteriota</taxon>
        <taxon>Cyanophyceae</taxon>
        <taxon>Synechococcales</taxon>
        <taxon>Prochlorococcaceae</taxon>
        <taxon>Prochlorococcus</taxon>
    </lineage>
</organism>
<keyword id="KW-0066">ATP synthesis</keyword>
<keyword id="KW-0067">ATP-binding</keyword>
<keyword id="KW-0139">CF(1)</keyword>
<keyword id="KW-0375">Hydrogen ion transport</keyword>
<keyword id="KW-0406">Ion transport</keyword>
<keyword id="KW-0472">Membrane</keyword>
<keyword id="KW-0547">Nucleotide-binding</keyword>
<keyword id="KW-0793">Thylakoid</keyword>
<keyword id="KW-1278">Translocase</keyword>
<keyword id="KW-0813">Transport</keyword>
<protein>
    <recommendedName>
        <fullName evidence="1">ATP synthase subunit beta</fullName>
        <ecNumber evidence="1">7.1.2.2</ecNumber>
    </recommendedName>
    <alternativeName>
        <fullName evidence="1">ATP synthase F1 sector subunit beta</fullName>
    </alternativeName>
    <alternativeName>
        <fullName evidence="1">F-ATPase subunit beta</fullName>
    </alternativeName>
</protein>
<name>ATPB_PROM1</name>
<accession>A2C4I4</accession>
<dbReference type="EC" id="7.1.2.2" evidence="1"/>
<dbReference type="EMBL" id="CP000553">
    <property type="protein sequence ID" value="ABM76394.1"/>
    <property type="molecule type" value="Genomic_DNA"/>
</dbReference>
<dbReference type="RefSeq" id="WP_011824380.1">
    <property type="nucleotide sequence ID" value="NC_008819.1"/>
</dbReference>
<dbReference type="SMR" id="A2C4I4"/>
<dbReference type="KEGG" id="pme:NATL1_18381"/>
<dbReference type="eggNOG" id="COG0055">
    <property type="taxonomic scope" value="Bacteria"/>
</dbReference>
<dbReference type="HOGENOM" id="CLU_022398_0_2_3"/>
<dbReference type="Proteomes" id="UP000002592">
    <property type="component" value="Chromosome"/>
</dbReference>
<dbReference type="GO" id="GO:0031676">
    <property type="term" value="C:plasma membrane-derived thylakoid membrane"/>
    <property type="evidence" value="ECO:0007669"/>
    <property type="project" value="UniProtKB-SubCell"/>
</dbReference>
<dbReference type="GO" id="GO:0045259">
    <property type="term" value="C:proton-transporting ATP synthase complex"/>
    <property type="evidence" value="ECO:0007669"/>
    <property type="project" value="UniProtKB-KW"/>
</dbReference>
<dbReference type="GO" id="GO:0005524">
    <property type="term" value="F:ATP binding"/>
    <property type="evidence" value="ECO:0007669"/>
    <property type="project" value="UniProtKB-UniRule"/>
</dbReference>
<dbReference type="GO" id="GO:0016887">
    <property type="term" value="F:ATP hydrolysis activity"/>
    <property type="evidence" value="ECO:0007669"/>
    <property type="project" value="InterPro"/>
</dbReference>
<dbReference type="GO" id="GO:0046933">
    <property type="term" value="F:proton-transporting ATP synthase activity, rotational mechanism"/>
    <property type="evidence" value="ECO:0007669"/>
    <property type="project" value="UniProtKB-UniRule"/>
</dbReference>
<dbReference type="CDD" id="cd18110">
    <property type="entry name" value="ATP-synt_F1_beta_C"/>
    <property type="match status" value="1"/>
</dbReference>
<dbReference type="CDD" id="cd18115">
    <property type="entry name" value="ATP-synt_F1_beta_N"/>
    <property type="match status" value="1"/>
</dbReference>
<dbReference type="CDD" id="cd01133">
    <property type="entry name" value="F1-ATPase_beta_CD"/>
    <property type="match status" value="1"/>
</dbReference>
<dbReference type="FunFam" id="1.10.1140.10:FF:000001">
    <property type="entry name" value="ATP synthase subunit beta"/>
    <property type="match status" value="1"/>
</dbReference>
<dbReference type="FunFam" id="3.40.50.300:FF:000004">
    <property type="entry name" value="ATP synthase subunit beta"/>
    <property type="match status" value="1"/>
</dbReference>
<dbReference type="FunFam" id="2.40.10.170:FF:000002">
    <property type="entry name" value="ATP synthase subunit beta, chloroplastic"/>
    <property type="match status" value="1"/>
</dbReference>
<dbReference type="Gene3D" id="2.40.10.170">
    <property type="match status" value="1"/>
</dbReference>
<dbReference type="Gene3D" id="1.10.1140.10">
    <property type="entry name" value="Bovine Mitochondrial F1-atpase, Atp Synthase Beta Chain, Chain D, domain 3"/>
    <property type="match status" value="1"/>
</dbReference>
<dbReference type="Gene3D" id="3.40.50.300">
    <property type="entry name" value="P-loop containing nucleotide triphosphate hydrolases"/>
    <property type="match status" value="1"/>
</dbReference>
<dbReference type="HAMAP" id="MF_01347">
    <property type="entry name" value="ATP_synth_beta_bact"/>
    <property type="match status" value="1"/>
</dbReference>
<dbReference type="InterPro" id="IPR003593">
    <property type="entry name" value="AAA+_ATPase"/>
</dbReference>
<dbReference type="InterPro" id="IPR055190">
    <property type="entry name" value="ATP-synt_VA_C"/>
</dbReference>
<dbReference type="InterPro" id="IPR005722">
    <property type="entry name" value="ATP_synth_F1_bsu"/>
</dbReference>
<dbReference type="InterPro" id="IPR020003">
    <property type="entry name" value="ATPase_a/bsu_AS"/>
</dbReference>
<dbReference type="InterPro" id="IPR050053">
    <property type="entry name" value="ATPase_alpha/beta_chains"/>
</dbReference>
<dbReference type="InterPro" id="IPR004100">
    <property type="entry name" value="ATPase_F1/V1/A1_a/bsu_N"/>
</dbReference>
<dbReference type="InterPro" id="IPR036121">
    <property type="entry name" value="ATPase_F1/V1/A1_a/bsu_N_sf"/>
</dbReference>
<dbReference type="InterPro" id="IPR000194">
    <property type="entry name" value="ATPase_F1/V1/A1_a/bsu_nucl-bd"/>
</dbReference>
<dbReference type="InterPro" id="IPR024034">
    <property type="entry name" value="ATPase_F1/V1_b/a_C"/>
</dbReference>
<dbReference type="InterPro" id="IPR027417">
    <property type="entry name" value="P-loop_NTPase"/>
</dbReference>
<dbReference type="NCBIfam" id="TIGR01039">
    <property type="entry name" value="atpD"/>
    <property type="match status" value="1"/>
</dbReference>
<dbReference type="PANTHER" id="PTHR15184">
    <property type="entry name" value="ATP SYNTHASE"/>
    <property type="match status" value="1"/>
</dbReference>
<dbReference type="PANTHER" id="PTHR15184:SF71">
    <property type="entry name" value="ATP SYNTHASE SUBUNIT BETA, MITOCHONDRIAL"/>
    <property type="match status" value="1"/>
</dbReference>
<dbReference type="Pfam" id="PF00006">
    <property type="entry name" value="ATP-synt_ab"/>
    <property type="match status" value="1"/>
</dbReference>
<dbReference type="Pfam" id="PF02874">
    <property type="entry name" value="ATP-synt_ab_N"/>
    <property type="match status" value="1"/>
</dbReference>
<dbReference type="Pfam" id="PF22919">
    <property type="entry name" value="ATP-synt_VA_C"/>
    <property type="match status" value="1"/>
</dbReference>
<dbReference type="SMART" id="SM00382">
    <property type="entry name" value="AAA"/>
    <property type="match status" value="1"/>
</dbReference>
<dbReference type="SUPFAM" id="SSF47917">
    <property type="entry name" value="C-terminal domain of alpha and beta subunits of F1 ATP synthase"/>
    <property type="match status" value="1"/>
</dbReference>
<dbReference type="SUPFAM" id="SSF50615">
    <property type="entry name" value="N-terminal domain of alpha and beta subunits of F1 ATP synthase"/>
    <property type="match status" value="1"/>
</dbReference>
<dbReference type="SUPFAM" id="SSF52540">
    <property type="entry name" value="P-loop containing nucleoside triphosphate hydrolases"/>
    <property type="match status" value="1"/>
</dbReference>
<dbReference type="PROSITE" id="PS00152">
    <property type="entry name" value="ATPASE_ALPHA_BETA"/>
    <property type="match status" value="1"/>
</dbReference>
<evidence type="ECO:0000255" key="1">
    <source>
        <dbReference type="HAMAP-Rule" id="MF_01347"/>
    </source>
</evidence>